<reference key="1">
    <citation type="submission" date="2003-06" db="EMBL/GenBank/DDBJ databases">
        <title>The complete genome sequence of Haemophilus ducreyi.</title>
        <authorList>
            <person name="Munson R.S. Jr."/>
            <person name="Ray W.C."/>
            <person name="Mahairas G."/>
            <person name="Sabo P."/>
            <person name="Mungur R."/>
            <person name="Johnson L."/>
            <person name="Nguyen D."/>
            <person name="Wang J."/>
            <person name="Forst C."/>
            <person name="Hood L."/>
        </authorList>
    </citation>
    <scope>NUCLEOTIDE SEQUENCE [LARGE SCALE GENOMIC DNA]</scope>
    <source>
        <strain>35000HP / ATCC 700724</strain>
    </source>
</reference>
<accession>Q7VLF2</accession>
<feature type="chain" id="PRO_0000155502" description="Ribosomal RNA large subunit methyltransferase E">
    <location>
        <begin position="1"/>
        <end position="208"/>
    </location>
</feature>
<feature type="active site" description="Proton acceptor" evidence="1">
    <location>
        <position position="163"/>
    </location>
</feature>
<feature type="binding site" evidence="1">
    <location>
        <position position="62"/>
    </location>
    <ligand>
        <name>S-adenosyl-L-methionine</name>
        <dbReference type="ChEBI" id="CHEBI:59789"/>
    </ligand>
</feature>
<feature type="binding site" evidence="1">
    <location>
        <position position="64"/>
    </location>
    <ligand>
        <name>S-adenosyl-L-methionine</name>
        <dbReference type="ChEBI" id="CHEBI:59789"/>
    </ligand>
</feature>
<feature type="binding site" evidence="1">
    <location>
        <position position="82"/>
    </location>
    <ligand>
        <name>S-adenosyl-L-methionine</name>
        <dbReference type="ChEBI" id="CHEBI:59789"/>
    </ligand>
</feature>
<feature type="binding site" evidence="1">
    <location>
        <position position="98"/>
    </location>
    <ligand>
        <name>S-adenosyl-L-methionine</name>
        <dbReference type="ChEBI" id="CHEBI:59789"/>
    </ligand>
</feature>
<feature type="binding site" evidence="1">
    <location>
        <position position="123"/>
    </location>
    <ligand>
        <name>S-adenosyl-L-methionine</name>
        <dbReference type="ChEBI" id="CHEBI:59789"/>
    </ligand>
</feature>
<organism>
    <name type="scientific">Haemophilus ducreyi (strain 35000HP / ATCC 700724)</name>
    <dbReference type="NCBI Taxonomy" id="233412"/>
    <lineage>
        <taxon>Bacteria</taxon>
        <taxon>Pseudomonadati</taxon>
        <taxon>Pseudomonadota</taxon>
        <taxon>Gammaproteobacteria</taxon>
        <taxon>Pasteurellales</taxon>
        <taxon>Pasteurellaceae</taxon>
        <taxon>Haemophilus</taxon>
    </lineage>
</organism>
<protein>
    <recommendedName>
        <fullName evidence="1">Ribosomal RNA large subunit methyltransferase E</fullName>
        <ecNumber evidence="1">2.1.1.166</ecNumber>
    </recommendedName>
    <alternativeName>
        <fullName evidence="1">23S rRNA Um2552 methyltransferase</fullName>
    </alternativeName>
    <alternativeName>
        <fullName evidence="1">rRNA (uridine-2'-O-)-methyltransferase</fullName>
    </alternativeName>
</protein>
<dbReference type="EC" id="2.1.1.166" evidence="1"/>
<dbReference type="EMBL" id="AE017143">
    <property type="protein sequence ID" value="AAP96296.1"/>
    <property type="molecule type" value="Genomic_DNA"/>
</dbReference>
<dbReference type="RefSeq" id="WP_010945341.1">
    <property type="nucleotide sequence ID" value="NC_002940.2"/>
</dbReference>
<dbReference type="SMR" id="Q7VLF2"/>
<dbReference type="STRING" id="233412.HD_1501"/>
<dbReference type="GeneID" id="60732826"/>
<dbReference type="KEGG" id="hdu:HD_1501"/>
<dbReference type="eggNOG" id="COG0293">
    <property type="taxonomic scope" value="Bacteria"/>
</dbReference>
<dbReference type="HOGENOM" id="CLU_009422_4_0_6"/>
<dbReference type="OrthoDB" id="9790080at2"/>
<dbReference type="Proteomes" id="UP000001022">
    <property type="component" value="Chromosome"/>
</dbReference>
<dbReference type="GO" id="GO:0005737">
    <property type="term" value="C:cytoplasm"/>
    <property type="evidence" value="ECO:0007669"/>
    <property type="project" value="UniProtKB-SubCell"/>
</dbReference>
<dbReference type="GO" id="GO:0008650">
    <property type="term" value="F:rRNA (uridine-2'-O-)-methyltransferase activity"/>
    <property type="evidence" value="ECO:0007669"/>
    <property type="project" value="UniProtKB-UniRule"/>
</dbReference>
<dbReference type="FunFam" id="3.40.50.150:FF:000005">
    <property type="entry name" value="Ribosomal RNA large subunit methyltransferase E"/>
    <property type="match status" value="1"/>
</dbReference>
<dbReference type="Gene3D" id="3.40.50.150">
    <property type="entry name" value="Vaccinia Virus protein VP39"/>
    <property type="match status" value="1"/>
</dbReference>
<dbReference type="HAMAP" id="MF_01547">
    <property type="entry name" value="RNA_methyltr_E"/>
    <property type="match status" value="1"/>
</dbReference>
<dbReference type="InterPro" id="IPR050082">
    <property type="entry name" value="RNA_methyltr_RlmE"/>
</dbReference>
<dbReference type="InterPro" id="IPR002877">
    <property type="entry name" value="RNA_MeTrfase_FtsJ_dom"/>
</dbReference>
<dbReference type="InterPro" id="IPR015507">
    <property type="entry name" value="rRNA-MeTfrase_E"/>
</dbReference>
<dbReference type="InterPro" id="IPR004512">
    <property type="entry name" value="rRNA_MeTrfase_gammaproteobac"/>
</dbReference>
<dbReference type="InterPro" id="IPR029063">
    <property type="entry name" value="SAM-dependent_MTases_sf"/>
</dbReference>
<dbReference type="NCBIfam" id="NF008390">
    <property type="entry name" value="PRK11188.1"/>
    <property type="match status" value="1"/>
</dbReference>
<dbReference type="NCBIfam" id="TIGR00438">
    <property type="entry name" value="rrmJ"/>
    <property type="match status" value="1"/>
</dbReference>
<dbReference type="PANTHER" id="PTHR10920">
    <property type="entry name" value="RIBOSOMAL RNA METHYLTRANSFERASE"/>
    <property type="match status" value="1"/>
</dbReference>
<dbReference type="PANTHER" id="PTHR10920:SF18">
    <property type="entry name" value="RRNA METHYLTRANSFERASE 2, MITOCHONDRIAL"/>
    <property type="match status" value="1"/>
</dbReference>
<dbReference type="Pfam" id="PF01728">
    <property type="entry name" value="FtsJ"/>
    <property type="match status" value="1"/>
</dbReference>
<dbReference type="PIRSF" id="PIRSF005461">
    <property type="entry name" value="23S_rRNA_mtase"/>
    <property type="match status" value="1"/>
</dbReference>
<dbReference type="SUPFAM" id="SSF53335">
    <property type="entry name" value="S-adenosyl-L-methionine-dependent methyltransferases"/>
    <property type="match status" value="1"/>
</dbReference>
<gene>
    <name evidence="1" type="primary">rlmE</name>
    <name evidence="1" type="synonym">ftsJ</name>
    <name evidence="1" type="synonym">rrmJ</name>
    <name type="ordered locus">HD_1501</name>
</gene>
<proteinExistence type="inferred from homology"/>
<evidence type="ECO:0000255" key="1">
    <source>
        <dbReference type="HAMAP-Rule" id="MF_01547"/>
    </source>
</evidence>
<name>RLME_HAEDU</name>
<keyword id="KW-0963">Cytoplasm</keyword>
<keyword id="KW-0489">Methyltransferase</keyword>
<keyword id="KW-1185">Reference proteome</keyword>
<keyword id="KW-0698">rRNA processing</keyword>
<keyword id="KW-0949">S-adenosyl-L-methionine</keyword>
<keyword id="KW-0808">Transferase</keyword>
<sequence>MGKKRSASSSRWLAEHFKDQFVQKAHKQKLRSRAYFKLDEIQQSDRLFRPGMTVVDLGAAPGGWSQYAVTQIGNQGRIIACDILDMNPIVGVDFLQGDFREVSVLNALLARVGDEMVDVVMSDMAPNFSGMPSVDIPRAMYLVELALDMCRQVLAPKGSFVVKVFQGEGFDDYLRDIRSMFTTVKVRKPEASRDRSREVYIVATGYKG</sequence>
<comment type="function">
    <text evidence="1">Specifically methylates the uridine in position 2552 of 23S rRNA at the 2'-O position of the ribose in the fully assembled 50S ribosomal subunit.</text>
</comment>
<comment type="catalytic activity">
    <reaction evidence="1">
        <text>uridine(2552) in 23S rRNA + S-adenosyl-L-methionine = 2'-O-methyluridine(2552) in 23S rRNA + S-adenosyl-L-homocysteine + H(+)</text>
        <dbReference type="Rhea" id="RHEA:42720"/>
        <dbReference type="Rhea" id="RHEA-COMP:10202"/>
        <dbReference type="Rhea" id="RHEA-COMP:10203"/>
        <dbReference type="ChEBI" id="CHEBI:15378"/>
        <dbReference type="ChEBI" id="CHEBI:57856"/>
        <dbReference type="ChEBI" id="CHEBI:59789"/>
        <dbReference type="ChEBI" id="CHEBI:65315"/>
        <dbReference type="ChEBI" id="CHEBI:74478"/>
        <dbReference type="EC" id="2.1.1.166"/>
    </reaction>
</comment>
<comment type="subcellular location">
    <subcellularLocation>
        <location evidence="1">Cytoplasm</location>
    </subcellularLocation>
</comment>
<comment type="similarity">
    <text evidence="1">Belongs to the class I-like SAM-binding methyltransferase superfamily. RNA methyltransferase RlmE family.</text>
</comment>